<comment type="function">
    <text evidence="1">This is one of the proteins that binds to the 5S RNA in the ribosome where it forms part of the central protuberance.</text>
</comment>
<comment type="subunit">
    <text evidence="1">Part of the 50S ribosomal subunit; part of the 5S rRNA/L5/L18/L25 subcomplex. Contacts the 5S rRNA. Binds to the 5S rRNA independently of L5 and L18.</text>
</comment>
<comment type="similarity">
    <text evidence="1">Belongs to the bacterial ribosomal protein bL25 family. CTC subfamily.</text>
</comment>
<feature type="chain" id="PRO_0000181585" description="Large ribosomal subunit protein bL25">
    <location>
        <begin position="1"/>
        <end position="204"/>
    </location>
</feature>
<feature type="region of interest" description="Disordered" evidence="2">
    <location>
        <begin position="1"/>
        <end position="20"/>
    </location>
</feature>
<evidence type="ECO:0000255" key="1">
    <source>
        <dbReference type="HAMAP-Rule" id="MF_01334"/>
    </source>
</evidence>
<evidence type="ECO:0000256" key="2">
    <source>
        <dbReference type="SAM" id="MobiDB-lite"/>
    </source>
</evidence>
<evidence type="ECO:0000305" key="3"/>
<reference key="1">
    <citation type="journal article" date="2001" name="Proc. Natl. Acad. Sci. U.S.A.">
        <title>Analysis of the chromosome sequence of the legume symbiont Sinorhizobium meliloti strain 1021.</title>
        <authorList>
            <person name="Capela D."/>
            <person name="Barloy-Hubler F."/>
            <person name="Gouzy J."/>
            <person name="Bothe G."/>
            <person name="Ampe F."/>
            <person name="Batut J."/>
            <person name="Boistard P."/>
            <person name="Becker A."/>
            <person name="Boutry M."/>
            <person name="Cadieu E."/>
            <person name="Dreano S."/>
            <person name="Gloux S."/>
            <person name="Godrie T."/>
            <person name="Goffeau A."/>
            <person name="Kahn D."/>
            <person name="Kiss E."/>
            <person name="Lelaure V."/>
            <person name="Masuy D."/>
            <person name="Pohl T."/>
            <person name="Portetelle D."/>
            <person name="Puehler A."/>
            <person name="Purnelle B."/>
            <person name="Ramsperger U."/>
            <person name="Renard C."/>
            <person name="Thebault P."/>
            <person name="Vandenbol M."/>
            <person name="Weidner S."/>
            <person name="Galibert F."/>
        </authorList>
    </citation>
    <scope>NUCLEOTIDE SEQUENCE [LARGE SCALE GENOMIC DNA]</scope>
    <source>
        <strain>1021</strain>
    </source>
</reference>
<reference key="2">
    <citation type="journal article" date="2001" name="Science">
        <title>The composite genome of the legume symbiont Sinorhizobium meliloti.</title>
        <authorList>
            <person name="Galibert F."/>
            <person name="Finan T.M."/>
            <person name="Long S.R."/>
            <person name="Puehler A."/>
            <person name="Abola P."/>
            <person name="Ampe F."/>
            <person name="Barloy-Hubler F."/>
            <person name="Barnett M.J."/>
            <person name="Becker A."/>
            <person name="Boistard P."/>
            <person name="Bothe G."/>
            <person name="Boutry M."/>
            <person name="Bowser L."/>
            <person name="Buhrmester J."/>
            <person name="Cadieu E."/>
            <person name="Capela D."/>
            <person name="Chain P."/>
            <person name="Cowie A."/>
            <person name="Davis R.W."/>
            <person name="Dreano S."/>
            <person name="Federspiel N.A."/>
            <person name="Fisher R.F."/>
            <person name="Gloux S."/>
            <person name="Godrie T."/>
            <person name="Goffeau A."/>
            <person name="Golding B."/>
            <person name="Gouzy J."/>
            <person name="Gurjal M."/>
            <person name="Hernandez-Lucas I."/>
            <person name="Hong A."/>
            <person name="Huizar L."/>
            <person name="Hyman R.W."/>
            <person name="Jones T."/>
            <person name="Kahn D."/>
            <person name="Kahn M.L."/>
            <person name="Kalman S."/>
            <person name="Keating D.H."/>
            <person name="Kiss E."/>
            <person name="Komp C."/>
            <person name="Lelaure V."/>
            <person name="Masuy D."/>
            <person name="Palm C."/>
            <person name="Peck M.C."/>
            <person name="Pohl T.M."/>
            <person name="Portetelle D."/>
            <person name="Purnelle B."/>
            <person name="Ramsperger U."/>
            <person name="Surzycki R."/>
            <person name="Thebault P."/>
            <person name="Vandenbol M."/>
            <person name="Vorhoelter F.J."/>
            <person name="Weidner S."/>
            <person name="Wells D.H."/>
            <person name="Wong K."/>
            <person name="Yeh K.-C."/>
            <person name="Batut J."/>
        </authorList>
    </citation>
    <scope>NUCLEOTIDE SEQUENCE [LARGE SCALE GENOMIC DNA]</scope>
    <source>
        <strain>1021</strain>
    </source>
</reference>
<protein>
    <recommendedName>
        <fullName evidence="1">Large ribosomal subunit protein bL25</fullName>
    </recommendedName>
    <alternativeName>
        <fullName evidence="3">50S ribosomal protein L25</fullName>
    </alternativeName>
    <alternativeName>
        <fullName evidence="1">General stress protein CTC</fullName>
    </alternativeName>
</protein>
<keyword id="KW-1185">Reference proteome</keyword>
<keyword id="KW-0687">Ribonucleoprotein</keyword>
<keyword id="KW-0689">Ribosomal protein</keyword>
<keyword id="KW-0694">RNA-binding</keyword>
<keyword id="KW-0699">rRNA-binding</keyword>
<proteinExistence type="inferred from homology"/>
<sequence length="204" mass="22161">MSETYELKAETRDRVGKGSSRELRRNGLIPAVIYGDKQPPLSIALSTKDVTMKIHAGGFMTTVATIDVNGEKIRVLPKDYQLDPVRDFTMHVDFLRVSKGSQVSVQVPVHFENEEKSPGLKQGGALNIVRHEVELNVSADNIPESLTVDLTGLKIGDTVHISNVKLPAGATPVIADRDFTVATITGRTQEAEPTEEAEGGEEEA</sequence>
<organism>
    <name type="scientific">Rhizobium meliloti (strain 1021)</name>
    <name type="common">Ensifer meliloti</name>
    <name type="synonym">Sinorhizobium meliloti</name>
    <dbReference type="NCBI Taxonomy" id="266834"/>
    <lineage>
        <taxon>Bacteria</taxon>
        <taxon>Pseudomonadati</taxon>
        <taxon>Pseudomonadota</taxon>
        <taxon>Alphaproteobacteria</taxon>
        <taxon>Hyphomicrobiales</taxon>
        <taxon>Rhizobiaceae</taxon>
        <taxon>Sinorhizobium/Ensifer group</taxon>
        <taxon>Sinorhizobium</taxon>
    </lineage>
</organism>
<accession>Q92N68</accession>
<name>RL25_RHIME</name>
<gene>
    <name evidence="1" type="primary">rplY</name>
    <name evidence="1" type="synonym">ctc</name>
    <name type="ordered locus">R02354</name>
    <name type="ORF">SMc02692</name>
</gene>
<dbReference type="EMBL" id="AL591688">
    <property type="protein sequence ID" value="CAC46933.1"/>
    <property type="molecule type" value="Genomic_DNA"/>
</dbReference>
<dbReference type="RefSeq" id="NP_386460.1">
    <property type="nucleotide sequence ID" value="NC_003047.1"/>
</dbReference>
<dbReference type="RefSeq" id="WP_003532863.1">
    <property type="nucleotide sequence ID" value="NC_003047.1"/>
</dbReference>
<dbReference type="SMR" id="Q92N68"/>
<dbReference type="EnsemblBacteria" id="CAC46933">
    <property type="protein sequence ID" value="CAC46933"/>
    <property type="gene ID" value="SMc02692"/>
</dbReference>
<dbReference type="KEGG" id="sme:SMc02692"/>
<dbReference type="PATRIC" id="fig|266834.11.peg.3834"/>
<dbReference type="eggNOG" id="COG1825">
    <property type="taxonomic scope" value="Bacteria"/>
</dbReference>
<dbReference type="HOGENOM" id="CLU_075939_0_0_5"/>
<dbReference type="OrthoDB" id="9806411at2"/>
<dbReference type="Proteomes" id="UP000001976">
    <property type="component" value="Chromosome"/>
</dbReference>
<dbReference type="GO" id="GO:0022625">
    <property type="term" value="C:cytosolic large ribosomal subunit"/>
    <property type="evidence" value="ECO:0007669"/>
    <property type="project" value="TreeGrafter"/>
</dbReference>
<dbReference type="GO" id="GO:0008097">
    <property type="term" value="F:5S rRNA binding"/>
    <property type="evidence" value="ECO:0007669"/>
    <property type="project" value="InterPro"/>
</dbReference>
<dbReference type="GO" id="GO:0003735">
    <property type="term" value="F:structural constituent of ribosome"/>
    <property type="evidence" value="ECO:0007669"/>
    <property type="project" value="InterPro"/>
</dbReference>
<dbReference type="GO" id="GO:0006412">
    <property type="term" value="P:translation"/>
    <property type="evidence" value="ECO:0007669"/>
    <property type="project" value="UniProtKB-UniRule"/>
</dbReference>
<dbReference type="CDD" id="cd00495">
    <property type="entry name" value="Ribosomal_L25_TL5_CTC"/>
    <property type="match status" value="1"/>
</dbReference>
<dbReference type="Gene3D" id="2.170.120.20">
    <property type="entry name" value="Ribosomal protein L25, beta domain"/>
    <property type="match status" value="1"/>
</dbReference>
<dbReference type="Gene3D" id="2.40.240.10">
    <property type="entry name" value="Ribosomal Protein L25, Chain P"/>
    <property type="match status" value="1"/>
</dbReference>
<dbReference type="HAMAP" id="MF_01334">
    <property type="entry name" value="Ribosomal_bL25_CTC"/>
    <property type="match status" value="1"/>
</dbReference>
<dbReference type="InterPro" id="IPR020056">
    <property type="entry name" value="Rbsml_bL25/Gln-tRNA_synth_N"/>
</dbReference>
<dbReference type="InterPro" id="IPR011035">
    <property type="entry name" value="Ribosomal_bL25/Gln-tRNA_synth"/>
</dbReference>
<dbReference type="InterPro" id="IPR020057">
    <property type="entry name" value="Ribosomal_bL25_b-dom"/>
</dbReference>
<dbReference type="InterPro" id="IPR037121">
    <property type="entry name" value="Ribosomal_bL25_C"/>
</dbReference>
<dbReference type="InterPro" id="IPR001021">
    <property type="entry name" value="Ribosomal_bL25_long"/>
</dbReference>
<dbReference type="InterPro" id="IPR029751">
    <property type="entry name" value="Ribosomal_L25_dom"/>
</dbReference>
<dbReference type="InterPro" id="IPR020930">
    <property type="entry name" value="Ribosomal_uL5_bac-type"/>
</dbReference>
<dbReference type="NCBIfam" id="TIGR00731">
    <property type="entry name" value="bL25_bact_ctc"/>
    <property type="match status" value="1"/>
</dbReference>
<dbReference type="NCBIfam" id="NF004128">
    <property type="entry name" value="PRK05618.1-2"/>
    <property type="match status" value="1"/>
</dbReference>
<dbReference type="NCBIfam" id="NF004612">
    <property type="entry name" value="PRK05943.1"/>
    <property type="match status" value="1"/>
</dbReference>
<dbReference type="PANTHER" id="PTHR33284">
    <property type="entry name" value="RIBOSOMAL PROTEIN L25/GLN-TRNA SYNTHETASE, ANTI-CODON-BINDING DOMAIN-CONTAINING PROTEIN"/>
    <property type="match status" value="1"/>
</dbReference>
<dbReference type="PANTHER" id="PTHR33284:SF1">
    <property type="entry name" value="RIBOSOMAL PROTEIN L25_GLN-TRNA SYNTHETASE, ANTI-CODON-BINDING DOMAIN-CONTAINING PROTEIN"/>
    <property type="match status" value="1"/>
</dbReference>
<dbReference type="Pfam" id="PF01386">
    <property type="entry name" value="Ribosomal_L25p"/>
    <property type="match status" value="1"/>
</dbReference>
<dbReference type="Pfam" id="PF14693">
    <property type="entry name" value="Ribosomal_TL5_C"/>
    <property type="match status" value="1"/>
</dbReference>
<dbReference type="SUPFAM" id="SSF50715">
    <property type="entry name" value="Ribosomal protein L25-like"/>
    <property type="match status" value="1"/>
</dbReference>